<dbReference type="EMBL" id="BC122665">
    <property type="protein sequence ID" value="AAI22666.1"/>
    <property type="molecule type" value="mRNA"/>
</dbReference>
<dbReference type="RefSeq" id="NP_001073063.1">
    <property type="nucleotide sequence ID" value="NM_001079595.1"/>
</dbReference>
<dbReference type="SMR" id="P82924"/>
<dbReference type="CORUM" id="P82924"/>
<dbReference type="FunCoup" id="P82924">
    <property type="interactions" value="1994"/>
</dbReference>
<dbReference type="IntAct" id="P82924">
    <property type="interactions" value="1"/>
</dbReference>
<dbReference type="STRING" id="9913.ENSBTAP00000000091"/>
<dbReference type="PaxDb" id="9913-ENSBTAP00000000091"/>
<dbReference type="Ensembl" id="ENSBTAT00000000091.5">
    <property type="protein sequence ID" value="ENSBTAP00000000091.4"/>
    <property type="gene ID" value="ENSBTAG00000000084.6"/>
</dbReference>
<dbReference type="GeneID" id="516084"/>
<dbReference type="KEGG" id="bta:516084"/>
<dbReference type="CTD" id="10884"/>
<dbReference type="VEuPathDB" id="HostDB:ENSBTAG00000000084"/>
<dbReference type="VGNC" id="VGNC:31669">
    <property type="gene designation" value="MRPS30"/>
</dbReference>
<dbReference type="eggNOG" id="KOG4461">
    <property type="taxonomic scope" value="Eukaryota"/>
</dbReference>
<dbReference type="GeneTree" id="ENSGT00390000001442"/>
<dbReference type="HOGENOM" id="CLU_049608_0_0_1"/>
<dbReference type="InParanoid" id="P82924"/>
<dbReference type="OMA" id="VNMPRYY"/>
<dbReference type="OrthoDB" id="6041973at2759"/>
<dbReference type="TreeFam" id="TF320686"/>
<dbReference type="Reactome" id="R-BTA-5389840">
    <property type="pathway name" value="Mitochondrial translation elongation"/>
</dbReference>
<dbReference type="Reactome" id="R-BTA-5419276">
    <property type="pathway name" value="Mitochondrial translation termination"/>
</dbReference>
<dbReference type="Proteomes" id="UP000009136">
    <property type="component" value="Chromosome 20"/>
</dbReference>
<dbReference type="Bgee" id="ENSBTAG00000000084">
    <property type="expression patterns" value="Expressed in semen and 106 other cell types or tissues"/>
</dbReference>
<dbReference type="GO" id="GO:0005743">
    <property type="term" value="C:mitochondrial inner membrane"/>
    <property type="evidence" value="ECO:0000304"/>
    <property type="project" value="Reactome"/>
</dbReference>
<dbReference type="GO" id="GO:0005762">
    <property type="term" value="C:mitochondrial large ribosomal subunit"/>
    <property type="evidence" value="ECO:0000318"/>
    <property type="project" value="GO_Central"/>
</dbReference>
<dbReference type="GO" id="GO:0003735">
    <property type="term" value="F:structural constituent of ribosome"/>
    <property type="evidence" value="ECO:0007669"/>
    <property type="project" value="InterPro"/>
</dbReference>
<dbReference type="GO" id="GO:0006412">
    <property type="term" value="P:translation"/>
    <property type="evidence" value="ECO:0007669"/>
    <property type="project" value="InterPro"/>
</dbReference>
<dbReference type="InterPro" id="IPR010793">
    <property type="entry name" value="Ribosomal_mL37/mL65"/>
</dbReference>
<dbReference type="InterPro" id="IPR039982">
    <property type="entry name" value="Ribosomal_mL65"/>
</dbReference>
<dbReference type="PANTHER" id="PTHR13014:SF3">
    <property type="entry name" value="LARGE RIBOSOMAL SUBUNIT PROTEIN ML65"/>
    <property type="match status" value="1"/>
</dbReference>
<dbReference type="PANTHER" id="PTHR13014">
    <property type="entry name" value="MITOCHONDRIAL 28S RIBOSOMAL PROTEIN S30/P52 PRO-APOTOTIC PROTEIN"/>
    <property type="match status" value="1"/>
</dbReference>
<dbReference type="Pfam" id="PF07147">
    <property type="entry name" value="PDCD9"/>
    <property type="match status" value="1"/>
</dbReference>
<reference key="1">
    <citation type="submission" date="2006-08" db="EMBL/GenBank/DDBJ databases">
        <authorList>
            <consortium name="NIH - Mammalian Gene Collection (MGC) project"/>
        </authorList>
    </citation>
    <scope>NUCLEOTIDE SEQUENCE [LARGE SCALE MRNA]</scope>
    <source>
        <strain>Hereford</strain>
        <tissue>Fetal pons</tissue>
    </source>
</reference>
<reference evidence="2" key="2">
    <citation type="journal article" date="2001" name="J. Biol. Chem.">
        <title>The small subunit of the mammalian mitochondrial ribosome: identification of the full complement of ribosomal proteins present.</title>
        <authorList>
            <person name="Koc E.C."/>
            <person name="Burkhart W."/>
            <person name="Blackburn K."/>
            <person name="Moseley A."/>
            <person name="Spremulli L.L."/>
        </authorList>
    </citation>
    <scope>PROTEIN SEQUENCE OF 38-56 AND 387-407</scope>
    <scope>IDENTIFICATION IN THE 28S MITOCHONDRIAL RIBOSOME</scope>
    <scope>SUBCELLULAR LOCATION</scope>
    <source>
        <tissue>Liver</tissue>
    </source>
</reference>
<name>RT30_BOVIN</name>
<evidence type="ECO:0000269" key="1">
    <source>
    </source>
</evidence>
<evidence type="ECO:0000305" key="2"/>
<sequence>MAATRCWRFVLRSPGLSLHTAAEATVTAPEVTGSDVKAAPVARYPPIVASLTADSKAARQRRVERWQATVHAAKSVDEKLRILTKMQFMKYVVYPQTFALNADRWYQSFTKTVFLSGLPPPQAQPDREPAQVVDLAALRAAVCDCLLQEHFFLRRKKRAPIYQERYAVASPFLDQLVPSLTGLLSAYNPVLAAAALDCNRPVHFYWLRGEEIIPGGHRKGRVDAVRYQINDKPHNQIRISRQLPEFVPLDYSVPVEVPVKNCKPDKLPLFKRQYENAIFIGTKTADPLCYGHTQFHLLPDKLKRERLLKQNCADQIEVIFRANAIASLFAWTGAQAMYQGFWSEADVTRPFVSQGVITDGKYFSFFCYQLNTLALTAQADQNNPRKNICWGTQSMPLYETIEDNDVKGFNDDVLLQLVHFLLNRPEEDKAQLLVN</sequence>
<protein>
    <recommendedName>
        <fullName evidence="2">Large ribosomal subunit protein mL65</fullName>
    </recommendedName>
    <alternativeName>
        <fullName>28S ribosomal protein S30, mitochondrial</fullName>
        <shortName>MRP-S30</shortName>
        <shortName>S30mt</shortName>
    </alternativeName>
</protein>
<feature type="chain" id="PRO_0000087719" description="Large ribosomal subunit protein mL65">
    <location>
        <begin position="1"/>
        <end position="435"/>
    </location>
</feature>
<organism evidence="2">
    <name type="scientific">Bos taurus</name>
    <name type="common">Bovine</name>
    <dbReference type="NCBI Taxonomy" id="9913"/>
    <lineage>
        <taxon>Eukaryota</taxon>
        <taxon>Metazoa</taxon>
        <taxon>Chordata</taxon>
        <taxon>Craniata</taxon>
        <taxon>Vertebrata</taxon>
        <taxon>Euteleostomi</taxon>
        <taxon>Mammalia</taxon>
        <taxon>Eutheria</taxon>
        <taxon>Laurasiatheria</taxon>
        <taxon>Artiodactyla</taxon>
        <taxon>Ruminantia</taxon>
        <taxon>Pecora</taxon>
        <taxon>Bovidae</taxon>
        <taxon>Bovinae</taxon>
        <taxon>Bos</taxon>
    </lineage>
</organism>
<proteinExistence type="evidence at protein level"/>
<accession>P82924</accession>
<accession>Q05B75</accession>
<gene>
    <name type="primary">MRPS30</name>
</gene>
<keyword id="KW-0903">Direct protein sequencing</keyword>
<keyword id="KW-0496">Mitochondrion</keyword>
<keyword id="KW-1185">Reference proteome</keyword>
<keyword id="KW-0687">Ribonucleoprotein</keyword>
<keyword id="KW-0689">Ribosomal protein</keyword>
<comment type="subunit">
    <text evidence="1">Component of the mitochondrial ribosome small subunit (28S) which comprises a 12S rRNA and about 30 distinct proteins.</text>
</comment>
<comment type="subcellular location">
    <subcellularLocation>
        <location evidence="1">Mitochondrion</location>
    </subcellularLocation>
</comment>
<comment type="similarity">
    <text evidence="2">Belongs to the mitochondrion-specific ribosomal protein mL65 family.</text>
</comment>